<proteinExistence type="evidence at protein level"/>
<gene>
    <name evidence="9" type="primary">Tailor</name>
    <name evidence="9" type="ORF">CG1091</name>
</gene>
<reference evidence="10" key="1">
    <citation type="journal article" date="2000" name="Science">
        <title>The genome sequence of Drosophila melanogaster.</title>
        <authorList>
            <person name="Adams M.D."/>
            <person name="Celniker S.E."/>
            <person name="Holt R.A."/>
            <person name="Evans C.A."/>
            <person name="Gocayne J.D."/>
            <person name="Amanatides P.G."/>
            <person name="Scherer S.E."/>
            <person name="Li P.W."/>
            <person name="Hoskins R.A."/>
            <person name="Galle R.F."/>
            <person name="George R.A."/>
            <person name="Lewis S.E."/>
            <person name="Richards S."/>
            <person name="Ashburner M."/>
            <person name="Henderson S.N."/>
            <person name="Sutton G.G."/>
            <person name="Wortman J.R."/>
            <person name="Yandell M.D."/>
            <person name="Zhang Q."/>
            <person name="Chen L.X."/>
            <person name="Brandon R.C."/>
            <person name="Rogers Y.-H.C."/>
            <person name="Blazej R.G."/>
            <person name="Champe M."/>
            <person name="Pfeiffer B.D."/>
            <person name="Wan K.H."/>
            <person name="Doyle C."/>
            <person name="Baxter E.G."/>
            <person name="Helt G."/>
            <person name="Nelson C.R."/>
            <person name="Miklos G.L.G."/>
            <person name="Abril J.F."/>
            <person name="Agbayani A."/>
            <person name="An H.-J."/>
            <person name="Andrews-Pfannkoch C."/>
            <person name="Baldwin D."/>
            <person name="Ballew R.M."/>
            <person name="Basu A."/>
            <person name="Baxendale J."/>
            <person name="Bayraktaroglu L."/>
            <person name="Beasley E.M."/>
            <person name="Beeson K.Y."/>
            <person name="Benos P.V."/>
            <person name="Berman B.P."/>
            <person name="Bhandari D."/>
            <person name="Bolshakov S."/>
            <person name="Borkova D."/>
            <person name="Botchan M.R."/>
            <person name="Bouck J."/>
            <person name="Brokstein P."/>
            <person name="Brottier P."/>
            <person name="Burtis K.C."/>
            <person name="Busam D.A."/>
            <person name="Butler H."/>
            <person name="Cadieu E."/>
            <person name="Center A."/>
            <person name="Chandra I."/>
            <person name="Cherry J.M."/>
            <person name="Cawley S."/>
            <person name="Dahlke C."/>
            <person name="Davenport L.B."/>
            <person name="Davies P."/>
            <person name="de Pablos B."/>
            <person name="Delcher A."/>
            <person name="Deng Z."/>
            <person name="Mays A.D."/>
            <person name="Dew I."/>
            <person name="Dietz S.M."/>
            <person name="Dodson K."/>
            <person name="Doup L.E."/>
            <person name="Downes M."/>
            <person name="Dugan-Rocha S."/>
            <person name="Dunkov B.C."/>
            <person name="Dunn P."/>
            <person name="Durbin K.J."/>
            <person name="Evangelista C.C."/>
            <person name="Ferraz C."/>
            <person name="Ferriera S."/>
            <person name="Fleischmann W."/>
            <person name="Fosler C."/>
            <person name="Gabrielian A.E."/>
            <person name="Garg N.S."/>
            <person name="Gelbart W.M."/>
            <person name="Glasser K."/>
            <person name="Glodek A."/>
            <person name="Gong F."/>
            <person name="Gorrell J.H."/>
            <person name="Gu Z."/>
            <person name="Guan P."/>
            <person name="Harris M."/>
            <person name="Harris N.L."/>
            <person name="Harvey D.A."/>
            <person name="Heiman T.J."/>
            <person name="Hernandez J.R."/>
            <person name="Houck J."/>
            <person name="Hostin D."/>
            <person name="Houston K.A."/>
            <person name="Howland T.J."/>
            <person name="Wei M.-H."/>
            <person name="Ibegwam C."/>
            <person name="Jalali M."/>
            <person name="Kalush F."/>
            <person name="Karpen G.H."/>
            <person name="Ke Z."/>
            <person name="Kennison J.A."/>
            <person name="Ketchum K.A."/>
            <person name="Kimmel B.E."/>
            <person name="Kodira C.D."/>
            <person name="Kraft C.L."/>
            <person name="Kravitz S."/>
            <person name="Kulp D."/>
            <person name="Lai Z."/>
            <person name="Lasko P."/>
            <person name="Lei Y."/>
            <person name="Levitsky A.A."/>
            <person name="Li J.H."/>
            <person name="Li Z."/>
            <person name="Liang Y."/>
            <person name="Lin X."/>
            <person name="Liu X."/>
            <person name="Mattei B."/>
            <person name="McIntosh T.C."/>
            <person name="McLeod M.P."/>
            <person name="McPherson D."/>
            <person name="Merkulov G."/>
            <person name="Milshina N.V."/>
            <person name="Mobarry C."/>
            <person name="Morris J."/>
            <person name="Moshrefi A."/>
            <person name="Mount S.M."/>
            <person name="Moy M."/>
            <person name="Murphy B."/>
            <person name="Murphy L."/>
            <person name="Muzny D.M."/>
            <person name="Nelson D.L."/>
            <person name="Nelson D.R."/>
            <person name="Nelson K.A."/>
            <person name="Nixon K."/>
            <person name="Nusskern D.R."/>
            <person name="Pacleb J.M."/>
            <person name="Palazzolo M."/>
            <person name="Pittman G.S."/>
            <person name="Pan S."/>
            <person name="Pollard J."/>
            <person name="Puri V."/>
            <person name="Reese M.G."/>
            <person name="Reinert K."/>
            <person name="Remington K."/>
            <person name="Saunders R.D.C."/>
            <person name="Scheeler F."/>
            <person name="Shen H."/>
            <person name="Shue B.C."/>
            <person name="Siden-Kiamos I."/>
            <person name="Simpson M."/>
            <person name="Skupski M.P."/>
            <person name="Smith T.J."/>
            <person name="Spier E."/>
            <person name="Spradling A.C."/>
            <person name="Stapleton M."/>
            <person name="Strong R."/>
            <person name="Sun E."/>
            <person name="Svirskas R."/>
            <person name="Tector C."/>
            <person name="Turner R."/>
            <person name="Venter E."/>
            <person name="Wang A.H."/>
            <person name="Wang X."/>
            <person name="Wang Z.-Y."/>
            <person name="Wassarman D.A."/>
            <person name="Weinstock G.M."/>
            <person name="Weissenbach J."/>
            <person name="Williams S.M."/>
            <person name="Woodage T."/>
            <person name="Worley K.C."/>
            <person name="Wu D."/>
            <person name="Yang S."/>
            <person name="Yao Q.A."/>
            <person name="Ye J."/>
            <person name="Yeh R.-F."/>
            <person name="Zaveri J.S."/>
            <person name="Zhan M."/>
            <person name="Zhang G."/>
            <person name="Zhao Q."/>
            <person name="Zheng L."/>
            <person name="Zheng X.H."/>
            <person name="Zhong F.N."/>
            <person name="Zhong W."/>
            <person name="Zhou X."/>
            <person name="Zhu S.C."/>
            <person name="Zhu X."/>
            <person name="Smith H.O."/>
            <person name="Gibbs R.A."/>
            <person name="Myers E.W."/>
            <person name="Rubin G.M."/>
            <person name="Venter J.C."/>
        </authorList>
    </citation>
    <scope>NUCLEOTIDE SEQUENCE [LARGE SCALE GENOMIC DNA]</scope>
    <source>
        <strain evidence="10">Berkeley</strain>
    </source>
</reference>
<reference evidence="10" key="2">
    <citation type="journal article" date="2002" name="Genome Biol.">
        <title>Annotation of the Drosophila melanogaster euchromatic genome: a systematic review.</title>
        <authorList>
            <person name="Misra S."/>
            <person name="Crosby M.A."/>
            <person name="Mungall C.J."/>
            <person name="Matthews B.B."/>
            <person name="Campbell K.S."/>
            <person name="Hradecky P."/>
            <person name="Huang Y."/>
            <person name="Kaminker J.S."/>
            <person name="Millburn G.H."/>
            <person name="Prochnik S.E."/>
            <person name="Smith C.D."/>
            <person name="Tupy J.L."/>
            <person name="Whitfield E.J."/>
            <person name="Bayraktaroglu L."/>
            <person name="Berman B.P."/>
            <person name="Bettencourt B.R."/>
            <person name="Celniker S.E."/>
            <person name="de Grey A.D.N.J."/>
            <person name="Drysdale R.A."/>
            <person name="Harris N.L."/>
            <person name="Richter J."/>
            <person name="Russo S."/>
            <person name="Schroeder A.J."/>
            <person name="Shu S.Q."/>
            <person name="Stapleton M."/>
            <person name="Yamada C."/>
            <person name="Ashburner M."/>
            <person name="Gelbart W.M."/>
            <person name="Rubin G.M."/>
            <person name="Lewis S.E."/>
        </authorList>
    </citation>
    <scope>GENOME REANNOTATION</scope>
    <source>
        <strain evidence="10">Berkeley</strain>
    </source>
</reference>
<reference evidence="8" key="3">
    <citation type="journal article" date="2002" name="Genome Biol.">
        <title>A Drosophila full-length cDNA resource.</title>
        <authorList>
            <person name="Stapleton M."/>
            <person name="Carlson J.W."/>
            <person name="Brokstein P."/>
            <person name="Yu C."/>
            <person name="Champe M."/>
            <person name="George R.A."/>
            <person name="Guarin H."/>
            <person name="Kronmiller B."/>
            <person name="Pacleb J.M."/>
            <person name="Park S."/>
            <person name="Wan K.H."/>
            <person name="Rubin G.M."/>
            <person name="Celniker S.E."/>
        </authorList>
    </citation>
    <scope>NUCLEOTIDE SEQUENCE [LARGE SCALE MRNA]</scope>
    <source>
        <strain evidence="8">Berkeley</strain>
        <tissue evidence="8">Embryo</tissue>
    </source>
</reference>
<reference evidence="6" key="4">
    <citation type="journal article" date="2015" name="Mol. Cell">
        <title>Uridylation of RNA hairpins by Tailor confines the emergence of microRNAs in Drosophila.</title>
        <authorList>
            <person name="Reimao-Pinto M.M."/>
            <person name="Ignatova V."/>
            <person name="Burkard T.R."/>
            <person name="Hung J.H."/>
            <person name="Manzenreither R.A."/>
            <person name="Sowemimo I."/>
            <person name="Herzog V.A."/>
            <person name="Reichholf B."/>
            <person name="Farina-Lopez S."/>
            <person name="Ameres S.L."/>
        </authorList>
    </citation>
    <scope>FUNCTION</scope>
    <scope>CATALYTIC ACTIVITY</scope>
    <scope>COFACTOR</scope>
    <scope>SUBCELLULAR LOCATION</scope>
    <scope>DISRUPTION PHENOTYPE</scope>
    <scope>MUTAGENESIS OF ASP-280</scope>
</reference>
<reference evidence="6" key="5">
    <citation type="journal article" date="2015" name="Mol. Cell">
        <title>Selective suppression of the splicing-mediated microRNA pathway by the terminal uridyltransferase Tailor.</title>
        <authorList>
            <person name="Bortolamiol-Becet D."/>
            <person name="Hu F."/>
            <person name="Jee D."/>
            <person name="Wen J."/>
            <person name="Okamura K."/>
            <person name="Lin C.J."/>
            <person name="Ameres S.L."/>
            <person name="Lai E.C."/>
        </authorList>
    </citation>
    <scope>FUNCTION</scope>
    <scope>CATALYTIC ACTIVITY</scope>
    <scope>COFACTOR</scope>
    <scope>DISRUPTION PHENOTYPE</scope>
</reference>
<name>TUTT_DROME</name>
<protein>
    <recommendedName>
        <fullName evidence="6">Terminal uridylyltransferase Tailor</fullName>
        <shortName evidence="6">TUTase Tailor</shortName>
        <ecNumber evidence="4 5">2.7.7.52</ecNumber>
    </recommendedName>
</protein>
<keyword id="KW-0002">3D-structure</keyword>
<keyword id="KW-0067">ATP-binding</keyword>
<keyword id="KW-0963">Cytoplasm</keyword>
<keyword id="KW-0460">Magnesium</keyword>
<keyword id="KW-0479">Metal-binding</keyword>
<keyword id="KW-0547">Nucleotide-binding</keyword>
<keyword id="KW-0548">Nucleotidyltransferase</keyword>
<keyword id="KW-1185">Reference proteome</keyword>
<keyword id="KW-0943">RNA-mediated gene silencing</keyword>
<keyword id="KW-0808">Transferase</keyword>
<sequence length="560" mass="63945">MRIEPGDSFWTKKAMFSNAERQYFETVRPRKTSLPGSTAPNIAAPVTKATKKNKTMAEMMPNKLLYMNPLTMEAHFFLQTLNSVNQTTNPPQLDPHLANLLERIMVGIESYLDRNPTYVLPQEMAAPGEGVAFVQPQELQTIKRTFSCSSCSNRIVGTTIAKAVAHLSEQHPKPNPNNQPVQPHPTHQTKQEKKQAQVKARQHITVRLPKKARAMIVGEITNVFKDKYPIADKLKVIPEYDVIEQDLCKLLSPGFPKQPLRVYKFGSRITGIGNRSSDLDLFVDIGNTFHTFEHRASNATVAKLRAMRKFFCDSEDWRLINFIEQARVPIIKTCHLPTGIECDICLNSMGFCNTNLLKYIFESQPLTQYMCIYVKNWLERCKLTEQISTYSITLMVIYFLQLQALLPPIAMLQIEDAANQAVLVGPWVVNFAQKSFSELGLQQLKATVPVIKGFLRNFFAYFAKFDYEHFLVCPYIGQANVEIAKIERMLHARYSAYVSDNPECSIQLKKPMVVQDPIQLNHNVTKAVTKYGLQTFVDYCQQTAELLEEPSTNWRQRYAF</sequence>
<evidence type="ECO:0000250" key="1">
    <source>
        <dbReference type="UniProtKB" id="O13833"/>
    </source>
</evidence>
<evidence type="ECO:0000255" key="2"/>
<evidence type="ECO:0000256" key="3">
    <source>
        <dbReference type="SAM" id="MobiDB-lite"/>
    </source>
</evidence>
<evidence type="ECO:0000269" key="4">
    <source>
    </source>
</evidence>
<evidence type="ECO:0000269" key="5">
    <source>
    </source>
</evidence>
<evidence type="ECO:0000305" key="6"/>
<evidence type="ECO:0000305" key="7">
    <source>
    </source>
</evidence>
<evidence type="ECO:0000312" key="8">
    <source>
        <dbReference type="EMBL" id="AAL48740.1"/>
    </source>
</evidence>
<evidence type="ECO:0000312" key="9">
    <source>
        <dbReference type="FlyBase" id="FBgn0037470"/>
    </source>
</evidence>
<evidence type="ECO:0000312" key="10">
    <source>
        <dbReference type="Proteomes" id="UP000000803"/>
    </source>
</evidence>
<evidence type="ECO:0007829" key="11">
    <source>
        <dbReference type="PDB" id="5Z4A"/>
    </source>
</evidence>
<evidence type="ECO:0007829" key="12">
    <source>
        <dbReference type="PDB" id="5Z4D"/>
    </source>
</evidence>
<evidence type="ECO:0007829" key="13">
    <source>
        <dbReference type="PDB" id="6I0V"/>
    </source>
</evidence>
<feature type="chain" id="PRO_0000436845" description="Terminal uridylyltransferase Tailor">
    <location>
        <begin position="1"/>
        <end position="560"/>
    </location>
</feature>
<feature type="domain" description="PAP-associated" evidence="2">
    <location>
        <begin position="455"/>
        <end position="522"/>
    </location>
</feature>
<feature type="region of interest" description="Disordered" evidence="3">
    <location>
        <begin position="169"/>
        <end position="197"/>
    </location>
</feature>
<feature type="compositionally biased region" description="Low complexity" evidence="3">
    <location>
        <begin position="176"/>
        <end position="188"/>
    </location>
</feature>
<feature type="binding site" evidence="1">
    <location>
        <position position="278"/>
    </location>
    <ligand>
        <name>Mg(2+)</name>
        <dbReference type="ChEBI" id="CHEBI:18420"/>
        <note>catalytic</note>
    </ligand>
</feature>
<feature type="binding site" evidence="7">
    <location>
        <position position="280"/>
    </location>
    <ligand>
        <name>Mg(2+)</name>
        <dbReference type="ChEBI" id="CHEBI:18420"/>
        <note>catalytic</note>
    </ligand>
</feature>
<feature type="mutagenesis site" description="Abolishes catalytic activity." evidence="5">
    <original>D</original>
    <variation>A</variation>
    <location>
        <position position="280"/>
    </location>
</feature>
<feature type="turn" evidence="13">
    <location>
        <begin position="200"/>
        <end position="203"/>
    </location>
</feature>
<feature type="helix" evidence="11">
    <location>
        <begin position="210"/>
        <end position="217"/>
    </location>
</feature>
<feature type="helix" evidence="11">
    <location>
        <begin position="220"/>
        <end position="233"/>
    </location>
</feature>
<feature type="helix" evidence="11">
    <location>
        <begin position="238"/>
        <end position="251"/>
    </location>
</feature>
<feature type="helix" evidence="11">
    <location>
        <begin position="252"/>
        <end position="254"/>
    </location>
</feature>
<feature type="strand" evidence="13">
    <location>
        <begin position="255"/>
        <end position="258"/>
    </location>
</feature>
<feature type="strand" evidence="11">
    <location>
        <begin position="260"/>
        <end position="266"/>
    </location>
</feature>
<feature type="helix" evidence="11">
    <location>
        <begin position="267"/>
        <end position="270"/>
    </location>
</feature>
<feature type="strand" evidence="11">
    <location>
        <begin position="279"/>
        <end position="287"/>
    </location>
</feature>
<feature type="helix" evidence="11">
    <location>
        <begin position="298"/>
        <end position="313"/>
    </location>
</feature>
<feature type="strand" evidence="11">
    <location>
        <begin position="317"/>
        <end position="323"/>
    </location>
</feature>
<feature type="strand" evidence="11">
    <location>
        <begin position="325"/>
        <end position="328"/>
    </location>
</feature>
<feature type="strand" evidence="11">
    <location>
        <begin position="330"/>
        <end position="335"/>
    </location>
</feature>
<feature type="turn" evidence="11">
    <location>
        <begin position="336"/>
        <end position="339"/>
    </location>
</feature>
<feature type="strand" evidence="11">
    <location>
        <begin position="340"/>
        <end position="346"/>
    </location>
</feature>
<feature type="helix" evidence="11">
    <location>
        <begin position="349"/>
        <end position="363"/>
    </location>
</feature>
<feature type="helix" evidence="11">
    <location>
        <begin position="365"/>
        <end position="380"/>
    </location>
</feature>
<feature type="turn" evidence="11">
    <location>
        <begin position="384"/>
        <end position="386"/>
    </location>
</feature>
<feature type="helix" evidence="11">
    <location>
        <begin position="389"/>
        <end position="402"/>
    </location>
</feature>
<feature type="helix" evidence="11">
    <location>
        <begin position="409"/>
        <end position="413"/>
    </location>
</feature>
<feature type="strand" evidence="11">
    <location>
        <begin position="416"/>
        <end position="418"/>
    </location>
</feature>
<feature type="helix" evidence="11">
    <location>
        <begin position="436"/>
        <end position="439"/>
    </location>
</feature>
<feature type="helix" evidence="11">
    <location>
        <begin position="448"/>
        <end position="464"/>
    </location>
</feature>
<feature type="turn" evidence="11">
    <location>
        <begin position="467"/>
        <end position="469"/>
    </location>
</feature>
<feature type="strand" evidence="12">
    <location>
        <begin position="470"/>
        <end position="472"/>
    </location>
</feature>
<feature type="turn" evidence="11">
    <location>
        <begin position="474"/>
        <end position="476"/>
    </location>
</feature>
<feature type="turn" evidence="11">
    <location>
        <begin position="483"/>
        <end position="485"/>
    </location>
</feature>
<feature type="helix" evidence="11">
    <location>
        <begin position="486"/>
        <end position="488"/>
    </location>
</feature>
<feature type="helix" evidence="11">
    <location>
        <begin position="492"/>
        <end position="500"/>
    </location>
</feature>
<feature type="helix" evidence="11">
    <location>
        <begin position="502"/>
        <end position="504"/>
    </location>
</feature>
<feature type="strand" evidence="11">
    <location>
        <begin position="509"/>
        <end position="511"/>
    </location>
</feature>
<feature type="strand" evidence="11">
    <location>
        <begin position="517"/>
        <end position="519"/>
    </location>
</feature>
<feature type="turn" evidence="11">
    <location>
        <begin position="524"/>
        <end position="527"/>
    </location>
</feature>
<feature type="helix" evidence="11">
    <location>
        <begin position="530"/>
        <end position="546"/>
    </location>
</feature>
<dbReference type="EC" id="2.7.7.52" evidence="4 5"/>
<dbReference type="EMBL" id="AE014297">
    <property type="protein sequence ID" value="AAF54068.3"/>
    <property type="molecule type" value="Genomic_DNA"/>
</dbReference>
<dbReference type="EMBL" id="AY071118">
    <property type="protein sequence ID" value="AAL48740.1"/>
    <property type="molecule type" value="mRNA"/>
</dbReference>
<dbReference type="RefSeq" id="NP_649693.3">
    <property type="nucleotide sequence ID" value="NM_141436.3"/>
</dbReference>
<dbReference type="PDB" id="5Z4A">
    <property type="method" value="X-ray"/>
    <property type="resolution" value="1.64 A"/>
    <property type="chains" value="A=202-550"/>
</dbReference>
<dbReference type="PDB" id="5Z4C">
    <property type="method" value="X-ray"/>
    <property type="resolution" value="1.65 A"/>
    <property type="chains" value="A=202-560"/>
</dbReference>
<dbReference type="PDB" id="5Z4D">
    <property type="method" value="X-ray"/>
    <property type="resolution" value="1.80 A"/>
    <property type="chains" value="A=202-560"/>
</dbReference>
<dbReference type="PDB" id="5Z4J">
    <property type="method" value="X-ray"/>
    <property type="resolution" value="1.82 A"/>
    <property type="chains" value="A=202-560"/>
</dbReference>
<dbReference type="PDB" id="5Z4M">
    <property type="method" value="X-ray"/>
    <property type="resolution" value="1.74 A"/>
    <property type="chains" value="A=202-560"/>
</dbReference>
<dbReference type="PDB" id="6I0S">
    <property type="method" value="X-ray"/>
    <property type="resolution" value="1.90 A"/>
    <property type="chains" value="A=180-560"/>
</dbReference>
<dbReference type="PDB" id="6I0T">
    <property type="method" value="X-ray"/>
    <property type="resolution" value="2.00 A"/>
    <property type="chains" value="A=180-560"/>
</dbReference>
<dbReference type="PDB" id="6I0U">
    <property type="method" value="X-ray"/>
    <property type="resolution" value="2.00 A"/>
    <property type="chains" value="A=180-560"/>
</dbReference>
<dbReference type="PDB" id="6I0V">
    <property type="method" value="X-ray"/>
    <property type="resolution" value="1.85 A"/>
    <property type="chains" value="A=180-560"/>
</dbReference>
<dbReference type="PDBsum" id="5Z4A"/>
<dbReference type="PDBsum" id="5Z4C"/>
<dbReference type="PDBsum" id="5Z4D"/>
<dbReference type="PDBsum" id="5Z4J"/>
<dbReference type="PDBsum" id="5Z4M"/>
<dbReference type="PDBsum" id="6I0S"/>
<dbReference type="PDBsum" id="6I0T"/>
<dbReference type="PDBsum" id="6I0U"/>
<dbReference type="PDBsum" id="6I0V"/>
<dbReference type="SMR" id="Q9VI58"/>
<dbReference type="FunCoup" id="Q9VI58">
    <property type="interactions" value="503"/>
</dbReference>
<dbReference type="IntAct" id="Q9VI58">
    <property type="interactions" value="12"/>
</dbReference>
<dbReference type="STRING" id="7227.FBpp0305518"/>
<dbReference type="PaxDb" id="7227-FBpp0305518"/>
<dbReference type="DNASU" id="40847"/>
<dbReference type="EnsemblMetazoa" id="FBtr0081640">
    <property type="protein sequence ID" value="FBpp0081154"/>
    <property type="gene ID" value="FBgn0037470"/>
</dbReference>
<dbReference type="GeneID" id="40847"/>
<dbReference type="KEGG" id="dme:Dmel_CG1091"/>
<dbReference type="UCSC" id="CG1091-RB">
    <property type="organism name" value="d. melanogaster"/>
</dbReference>
<dbReference type="AGR" id="FB:FBgn0037470"/>
<dbReference type="CTD" id="40847"/>
<dbReference type="FlyBase" id="FBgn0037470">
    <property type="gene designation" value="Tailor"/>
</dbReference>
<dbReference type="VEuPathDB" id="VectorBase:FBgn0037470"/>
<dbReference type="eggNOG" id="KOG2277">
    <property type="taxonomic scope" value="Eukaryota"/>
</dbReference>
<dbReference type="GeneTree" id="ENSGT00940000156640"/>
<dbReference type="InParanoid" id="Q9VI58"/>
<dbReference type="OrthoDB" id="407432at2759"/>
<dbReference type="PhylomeDB" id="Q9VI58"/>
<dbReference type="BRENDA" id="2.7.7.52">
    <property type="organism ID" value="1994"/>
</dbReference>
<dbReference type="SignaLink" id="Q9VI58"/>
<dbReference type="BioGRID-ORCS" id="40847">
    <property type="hits" value="1 hit in 1 CRISPR screen"/>
</dbReference>
<dbReference type="ChiTaRS" id="Tailor">
    <property type="organism name" value="fly"/>
</dbReference>
<dbReference type="GenomeRNAi" id="40847"/>
<dbReference type="PRO" id="PR:Q9VI58"/>
<dbReference type="Proteomes" id="UP000000803">
    <property type="component" value="Chromosome 3R"/>
</dbReference>
<dbReference type="Bgee" id="FBgn0037470">
    <property type="expression patterns" value="Expressed in eye disc (Drosophila) and 177 other cell types or tissues"/>
</dbReference>
<dbReference type="ExpressionAtlas" id="Q9VI58">
    <property type="expression patterns" value="baseline and differential"/>
</dbReference>
<dbReference type="GO" id="GO:0005737">
    <property type="term" value="C:cytoplasm"/>
    <property type="evidence" value="ECO:0000314"/>
    <property type="project" value="FlyBase"/>
</dbReference>
<dbReference type="GO" id="GO:0005524">
    <property type="term" value="F:ATP binding"/>
    <property type="evidence" value="ECO:0007669"/>
    <property type="project" value="UniProtKB-KW"/>
</dbReference>
<dbReference type="GO" id="GO:0046872">
    <property type="term" value="F:metal ion binding"/>
    <property type="evidence" value="ECO:0007669"/>
    <property type="project" value="UniProtKB-KW"/>
</dbReference>
<dbReference type="GO" id="GO:0050265">
    <property type="term" value="F:RNA uridylyltransferase activity"/>
    <property type="evidence" value="ECO:0000314"/>
    <property type="project" value="FlyBase"/>
</dbReference>
<dbReference type="GO" id="GO:2000632">
    <property type="term" value="P:negative regulation of pre-miRNA processing"/>
    <property type="evidence" value="ECO:0000315"/>
    <property type="project" value="FlyBase"/>
</dbReference>
<dbReference type="GO" id="GO:2000627">
    <property type="term" value="P:positive regulation of miRNA catabolic process"/>
    <property type="evidence" value="ECO:0000314"/>
    <property type="project" value="FlyBase"/>
</dbReference>
<dbReference type="GO" id="GO:0031047">
    <property type="term" value="P:regulatory ncRNA-mediated gene silencing"/>
    <property type="evidence" value="ECO:0007669"/>
    <property type="project" value="UniProtKB-KW"/>
</dbReference>
<dbReference type="CDD" id="cd05402">
    <property type="entry name" value="NT_PAP_TUTase"/>
    <property type="match status" value="1"/>
</dbReference>
<dbReference type="FunFam" id="3.30.460.10:FF:000096">
    <property type="entry name" value="Tailor, isoform A"/>
    <property type="match status" value="1"/>
</dbReference>
<dbReference type="FunFam" id="1.10.1410.10:FF:000041">
    <property type="entry name" value="Tailor, isoform C"/>
    <property type="match status" value="1"/>
</dbReference>
<dbReference type="Gene3D" id="1.10.1410.10">
    <property type="match status" value="1"/>
</dbReference>
<dbReference type="Gene3D" id="3.30.460.10">
    <property type="entry name" value="Beta Polymerase, domain 2"/>
    <property type="match status" value="1"/>
</dbReference>
<dbReference type="InterPro" id="IPR054708">
    <property type="entry name" value="MTPAP-like_central"/>
</dbReference>
<dbReference type="InterPro" id="IPR043519">
    <property type="entry name" value="NT_sf"/>
</dbReference>
<dbReference type="PANTHER" id="PTHR12271">
    <property type="entry name" value="POLY A POLYMERASE CID PAP -RELATED"/>
    <property type="match status" value="1"/>
</dbReference>
<dbReference type="PANTHER" id="PTHR12271:SF66">
    <property type="entry name" value="TERMINAL URIDYLYLTRANSFERASE TAILOR"/>
    <property type="match status" value="1"/>
</dbReference>
<dbReference type="Pfam" id="PF22600">
    <property type="entry name" value="MTPAP-like_central"/>
    <property type="match status" value="1"/>
</dbReference>
<dbReference type="SUPFAM" id="SSF81301">
    <property type="entry name" value="Nucleotidyltransferase"/>
    <property type="match status" value="1"/>
</dbReference>
<dbReference type="SUPFAM" id="SSF81631">
    <property type="entry name" value="PAP/OAS1 substrate-binding domain"/>
    <property type="match status" value="1"/>
</dbReference>
<accession>Q9VI58</accession>
<comment type="function">
    <text evidence="4 5">Uridylyltransferase which mediates terminal uridylation of miRNAs, leading to their degradation. Has high specificity for splicing-derived miRNAs (mirtrons) and other miRNA substrates containing a 3'-G terminal nucleotide. Appears to be a major suppressor of mirtron biogenesis.</text>
</comment>
<comment type="catalytic activity">
    <reaction evidence="4 5">
        <text>RNA(n) + UTP = RNA(n)-3'-uridine ribonucleotide + diphosphate</text>
        <dbReference type="Rhea" id="RHEA:14785"/>
        <dbReference type="Rhea" id="RHEA-COMP:14527"/>
        <dbReference type="Rhea" id="RHEA-COMP:17348"/>
        <dbReference type="ChEBI" id="CHEBI:33019"/>
        <dbReference type="ChEBI" id="CHEBI:46398"/>
        <dbReference type="ChEBI" id="CHEBI:140395"/>
        <dbReference type="ChEBI" id="CHEBI:173116"/>
        <dbReference type="EC" id="2.7.7.52"/>
    </reaction>
</comment>
<comment type="cofactor">
    <cofactor evidence="4 5">
        <name>Mg(2+)</name>
        <dbReference type="ChEBI" id="CHEBI:18420"/>
    </cofactor>
    <text evidence="4">No activity with Mn(2+) or Ca(2+).</text>
</comment>
<comment type="subcellular location">
    <subcellularLocation>
        <location evidence="5">Cytoplasm</location>
    </subcellularLocation>
</comment>
<comment type="disruption phenotype">
    <text evidence="4 5">Viable. Fertility is significantly reduced.</text>
</comment>
<organism evidence="10">
    <name type="scientific">Drosophila melanogaster</name>
    <name type="common">Fruit fly</name>
    <dbReference type="NCBI Taxonomy" id="7227"/>
    <lineage>
        <taxon>Eukaryota</taxon>
        <taxon>Metazoa</taxon>
        <taxon>Ecdysozoa</taxon>
        <taxon>Arthropoda</taxon>
        <taxon>Hexapoda</taxon>
        <taxon>Insecta</taxon>
        <taxon>Pterygota</taxon>
        <taxon>Neoptera</taxon>
        <taxon>Endopterygota</taxon>
        <taxon>Diptera</taxon>
        <taxon>Brachycera</taxon>
        <taxon>Muscomorpha</taxon>
        <taxon>Ephydroidea</taxon>
        <taxon>Drosophilidae</taxon>
        <taxon>Drosophila</taxon>
        <taxon>Sophophora</taxon>
    </lineage>
</organism>